<evidence type="ECO:0000250" key="1"/>
<evidence type="ECO:0000255" key="2"/>
<evidence type="ECO:0000305" key="3"/>
<name>NORM_SHEON</name>
<protein>
    <recommendedName>
        <fullName>Probable multidrug resistance protein NorM</fullName>
    </recommendedName>
    <alternativeName>
        <fullName>Multidrug-efflux transporter</fullName>
    </alternativeName>
</protein>
<comment type="function">
    <text evidence="1">Multidrug efflux pump.</text>
</comment>
<comment type="subcellular location">
    <subcellularLocation>
        <location evidence="1">Cell inner membrane</location>
        <topology evidence="1">Multi-pass membrane protein</topology>
    </subcellularLocation>
</comment>
<comment type="similarity">
    <text evidence="3">Belongs to the multi antimicrobial extrusion (MATE) (TC 2.A.66.1) family.</text>
</comment>
<organism>
    <name type="scientific">Shewanella oneidensis (strain ATCC 700550 / JCM 31522 / CIP 106686 / LMG 19005 / NCIMB 14063 / MR-1)</name>
    <dbReference type="NCBI Taxonomy" id="211586"/>
    <lineage>
        <taxon>Bacteria</taxon>
        <taxon>Pseudomonadati</taxon>
        <taxon>Pseudomonadota</taxon>
        <taxon>Gammaproteobacteria</taxon>
        <taxon>Alteromonadales</taxon>
        <taxon>Shewanellaceae</taxon>
        <taxon>Shewanella</taxon>
    </lineage>
</organism>
<proteinExistence type="inferred from homology"/>
<sequence length="459" mass="49441">MKHSGFQAKRLIQLALPVLIAQVTQTMMGFIDTVMAGRVSAVDMAAVAVGTSLWLPAILFVQGLLMAFTPLFAHHNGANNQKAIQPLAFQGAYLALIGGLGVMVFLASAPLVLSHMNLEPQLYNLTIGYIDGILWGAPAFVLYQVLRGCSEGISYTLPTMVIGFVGLAVNIPANYIFIYGHFGIPAMGGAGCGIATALVFWAMLIAMAIYMQFHKKFAALAPFSQFHRPDFATMKKMTKLGLPIAMALFFEVSLFAIIALLLAPLGATVVASHQIALNFSAIVFMLPLSIGIAVSIRIGYYLGRDRADISAVVAKVGLLLALSLALSTAILTVLFRFQIAELYNSDPEVVVLAGSLMLMAALYQLSDSVQVVAAGALRGYKDTRSAFYITLFSYWGIGMSLGYTLAYTDFIVPAMGAHGFWTGLIAGLTSAALLFFIRLRYIQKHRVHLSLIEGDSVHH</sequence>
<gene>
    <name type="primary">norM</name>
    <name type="ordered locus">SO_2295</name>
</gene>
<dbReference type="EMBL" id="AE014299">
    <property type="protein sequence ID" value="AAN55335.1"/>
    <property type="molecule type" value="Genomic_DNA"/>
</dbReference>
<dbReference type="RefSeq" id="NP_717891.1">
    <property type="nucleotide sequence ID" value="NC_004347.2"/>
</dbReference>
<dbReference type="RefSeq" id="WP_011072297.1">
    <property type="nucleotide sequence ID" value="NC_004347.2"/>
</dbReference>
<dbReference type="SMR" id="Q8EES3"/>
<dbReference type="STRING" id="211586.SO_2295"/>
<dbReference type="PaxDb" id="211586-SO_2295"/>
<dbReference type="KEGG" id="son:SO_2295"/>
<dbReference type="PATRIC" id="fig|211586.12.peg.2210"/>
<dbReference type="eggNOG" id="COG0534">
    <property type="taxonomic scope" value="Bacteria"/>
</dbReference>
<dbReference type="HOGENOM" id="CLU_012893_6_0_6"/>
<dbReference type="OrthoDB" id="9780160at2"/>
<dbReference type="PhylomeDB" id="Q8EES3"/>
<dbReference type="BioCyc" id="SONE211586:G1GMP-2097-MONOMER"/>
<dbReference type="Proteomes" id="UP000008186">
    <property type="component" value="Chromosome"/>
</dbReference>
<dbReference type="GO" id="GO:0016020">
    <property type="term" value="C:membrane"/>
    <property type="evidence" value="ECO:0000318"/>
    <property type="project" value="GO_Central"/>
</dbReference>
<dbReference type="GO" id="GO:0005886">
    <property type="term" value="C:plasma membrane"/>
    <property type="evidence" value="ECO:0007669"/>
    <property type="project" value="UniProtKB-SubCell"/>
</dbReference>
<dbReference type="GO" id="GO:0015297">
    <property type="term" value="F:antiporter activity"/>
    <property type="evidence" value="ECO:0007669"/>
    <property type="project" value="UniProtKB-KW"/>
</dbReference>
<dbReference type="GO" id="GO:0042910">
    <property type="term" value="F:xenobiotic transmembrane transporter activity"/>
    <property type="evidence" value="ECO:0000318"/>
    <property type="project" value="GO_Central"/>
</dbReference>
<dbReference type="GO" id="GO:0006811">
    <property type="term" value="P:monoatomic ion transport"/>
    <property type="evidence" value="ECO:0007669"/>
    <property type="project" value="UniProtKB-KW"/>
</dbReference>
<dbReference type="GO" id="GO:0046677">
    <property type="term" value="P:response to antibiotic"/>
    <property type="evidence" value="ECO:0000318"/>
    <property type="project" value="GO_Central"/>
</dbReference>
<dbReference type="CDD" id="cd13131">
    <property type="entry name" value="MATE_NorM_like"/>
    <property type="match status" value="1"/>
</dbReference>
<dbReference type="InterPro" id="IPR002528">
    <property type="entry name" value="MATE_fam"/>
</dbReference>
<dbReference type="InterPro" id="IPR050222">
    <property type="entry name" value="MATE_MdtK"/>
</dbReference>
<dbReference type="InterPro" id="IPR048279">
    <property type="entry name" value="MdtK-like"/>
</dbReference>
<dbReference type="NCBIfam" id="TIGR00797">
    <property type="entry name" value="matE"/>
    <property type="match status" value="1"/>
</dbReference>
<dbReference type="PANTHER" id="PTHR43298:SF2">
    <property type="entry name" value="FMN_FAD EXPORTER YEEO-RELATED"/>
    <property type="match status" value="1"/>
</dbReference>
<dbReference type="PANTHER" id="PTHR43298">
    <property type="entry name" value="MULTIDRUG RESISTANCE PROTEIN NORM-RELATED"/>
    <property type="match status" value="1"/>
</dbReference>
<dbReference type="Pfam" id="PF01554">
    <property type="entry name" value="MatE"/>
    <property type="match status" value="2"/>
</dbReference>
<dbReference type="PIRSF" id="PIRSF006603">
    <property type="entry name" value="DinF"/>
    <property type="match status" value="1"/>
</dbReference>
<reference key="1">
    <citation type="journal article" date="2002" name="Nat. Biotechnol.">
        <title>Genome sequence of the dissimilatory metal ion-reducing bacterium Shewanella oneidensis.</title>
        <authorList>
            <person name="Heidelberg J.F."/>
            <person name="Paulsen I.T."/>
            <person name="Nelson K.E."/>
            <person name="Gaidos E.J."/>
            <person name="Nelson W.C."/>
            <person name="Read T.D."/>
            <person name="Eisen J.A."/>
            <person name="Seshadri R."/>
            <person name="Ward N.L."/>
            <person name="Methe B.A."/>
            <person name="Clayton R.A."/>
            <person name="Meyer T."/>
            <person name="Tsapin A."/>
            <person name="Scott J."/>
            <person name="Beanan M.J."/>
            <person name="Brinkac L.M."/>
            <person name="Daugherty S.C."/>
            <person name="DeBoy R.T."/>
            <person name="Dodson R.J."/>
            <person name="Durkin A.S."/>
            <person name="Haft D.H."/>
            <person name="Kolonay J.F."/>
            <person name="Madupu R."/>
            <person name="Peterson J.D."/>
            <person name="Umayam L.A."/>
            <person name="White O."/>
            <person name="Wolf A.M."/>
            <person name="Vamathevan J.J."/>
            <person name="Weidman J.F."/>
            <person name="Impraim M."/>
            <person name="Lee K."/>
            <person name="Berry K.J."/>
            <person name="Lee C."/>
            <person name="Mueller J."/>
            <person name="Khouri H.M."/>
            <person name="Gill J."/>
            <person name="Utterback T.R."/>
            <person name="McDonald L.A."/>
            <person name="Feldblyum T.V."/>
            <person name="Smith H.O."/>
            <person name="Venter J.C."/>
            <person name="Nealson K.H."/>
            <person name="Fraser C.M."/>
        </authorList>
    </citation>
    <scope>NUCLEOTIDE SEQUENCE [LARGE SCALE GENOMIC DNA]</scope>
    <source>
        <strain>ATCC 700550 / JCM 31522 / CIP 106686 / LMG 19005 / NCIMB 14063 / MR-1</strain>
    </source>
</reference>
<keyword id="KW-0050">Antiport</keyword>
<keyword id="KW-0997">Cell inner membrane</keyword>
<keyword id="KW-1003">Cell membrane</keyword>
<keyword id="KW-0406">Ion transport</keyword>
<keyword id="KW-0472">Membrane</keyword>
<keyword id="KW-1185">Reference proteome</keyword>
<keyword id="KW-0812">Transmembrane</keyword>
<keyword id="KW-1133">Transmembrane helix</keyword>
<keyword id="KW-0813">Transport</keyword>
<accession>Q8EES3</accession>
<feature type="chain" id="PRO_0000164238" description="Probable multidrug resistance protein NorM">
    <location>
        <begin position="1"/>
        <end position="459"/>
    </location>
</feature>
<feature type="transmembrane region" description="Helical" evidence="2">
    <location>
        <begin position="12"/>
        <end position="31"/>
    </location>
</feature>
<feature type="transmembrane region" description="Helical" evidence="2">
    <location>
        <begin position="46"/>
        <end position="68"/>
    </location>
</feature>
<feature type="transmembrane region" description="Helical" evidence="2">
    <location>
        <begin position="89"/>
        <end position="111"/>
    </location>
</feature>
<feature type="transmembrane region" description="Helical" evidence="2">
    <location>
        <begin position="121"/>
        <end position="143"/>
    </location>
</feature>
<feature type="transmembrane region" description="Helical" evidence="2">
    <location>
        <begin position="155"/>
        <end position="177"/>
    </location>
</feature>
<feature type="transmembrane region" description="Helical" evidence="2">
    <location>
        <begin position="187"/>
        <end position="209"/>
    </location>
</feature>
<feature type="transmembrane region" description="Helical" evidence="2">
    <location>
        <begin position="244"/>
        <end position="266"/>
    </location>
</feature>
<feature type="transmembrane region" description="Helical" evidence="2">
    <location>
        <begin position="281"/>
        <end position="303"/>
    </location>
</feature>
<feature type="transmembrane region" description="Helical" evidence="2">
    <location>
        <begin position="316"/>
        <end position="335"/>
    </location>
</feature>
<feature type="transmembrane region" description="Helical" evidence="2">
    <location>
        <begin position="350"/>
        <end position="372"/>
    </location>
</feature>
<feature type="transmembrane region" description="Helical" evidence="2">
    <location>
        <begin position="385"/>
        <end position="407"/>
    </location>
</feature>
<feature type="transmembrane region" description="Helical" evidence="2">
    <location>
        <begin position="417"/>
        <end position="439"/>
    </location>
</feature>